<feature type="chain" id="PRO_1000003313" description="Ribosome-recycling factor">
    <location>
        <begin position="1"/>
        <end position="185"/>
    </location>
</feature>
<reference key="1">
    <citation type="journal article" date="2006" name="PLoS Genet.">
        <title>The complete genome sequence and comparative genome analysis of the high pathogenicity Yersinia enterocolitica strain 8081.</title>
        <authorList>
            <person name="Thomson N.R."/>
            <person name="Howard S."/>
            <person name="Wren B.W."/>
            <person name="Holden M.T.G."/>
            <person name="Crossman L."/>
            <person name="Challis G.L."/>
            <person name="Churcher C."/>
            <person name="Mungall K."/>
            <person name="Brooks K."/>
            <person name="Chillingworth T."/>
            <person name="Feltwell T."/>
            <person name="Abdellah Z."/>
            <person name="Hauser H."/>
            <person name="Jagels K."/>
            <person name="Maddison M."/>
            <person name="Moule S."/>
            <person name="Sanders M."/>
            <person name="Whitehead S."/>
            <person name="Quail M.A."/>
            <person name="Dougan G."/>
            <person name="Parkhill J."/>
            <person name="Prentice M.B."/>
        </authorList>
    </citation>
    <scope>NUCLEOTIDE SEQUENCE [LARGE SCALE GENOMIC DNA]</scope>
    <source>
        <strain>NCTC 13174 / 8081</strain>
    </source>
</reference>
<organism>
    <name type="scientific">Yersinia enterocolitica serotype O:8 / biotype 1B (strain NCTC 13174 / 8081)</name>
    <dbReference type="NCBI Taxonomy" id="393305"/>
    <lineage>
        <taxon>Bacteria</taxon>
        <taxon>Pseudomonadati</taxon>
        <taxon>Pseudomonadota</taxon>
        <taxon>Gammaproteobacteria</taxon>
        <taxon>Enterobacterales</taxon>
        <taxon>Yersiniaceae</taxon>
        <taxon>Yersinia</taxon>
    </lineage>
</organism>
<keyword id="KW-0963">Cytoplasm</keyword>
<keyword id="KW-0648">Protein biosynthesis</keyword>
<protein>
    <recommendedName>
        <fullName evidence="1">Ribosome-recycling factor</fullName>
        <shortName evidence="1">RRF</shortName>
    </recommendedName>
    <alternativeName>
        <fullName evidence="1">Ribosome-releasing factor</fullName>
    </alternativeName>
</protein>
<gene>
    <name evidence="1" type="primary">frr</name>
    <name type="ordered locus">YE3281</name>
</gene>
<sequence>MINEIRKDTEVRMEKCLEVFQNHISKIRTGRASPSILDGIQVEYYGTATPLRQLANIVVEDSRTLALTVFDRSLSAAVEKAIMTSDLGLNPSSAGTVIRVPLPALTEERRKDLIKVVRAEAEQGRVSIRNVRRDANEKVKALLKDKEISEDEDRRSQDDIQKLTDAFIKKVDAALAAKETELMDF</sequence>
<name>RRF_YERE8</name>
<dbReference type="EMBL" id="AM286415">
    <property type="protein sequence ID" value="CAL13311.1"/>
    <property type="molecule type" value="Genomic_DNA"/>
</dbReference>
<dbReference type="RefSeq" id="WP_005164052.1">
    <property type="nucleotide sequence ID" value="NC_008800.1"/>
</dbReference>
<dbReference type="RefSeq" id="YP_001007455.1">
    <property type="nucleotide sequence ID" value="NC_008800.1"/>
</dbReference>
<dbReference type="SMR" id="A1JP79"/>
<dbReference type="GeneID" id="93970085"/>
<dbReference type="KEGG" id="yen:YE3281"/>
<dbReference type="PATRIC" id="fig|393305.7.peg.3490"/>
<dbReference type="eggNOG" id="COG0233">
    <property type="taxonomic scope" value="Bacteria"/>
</dbReference>
<dbReference type="HOGENOM" id="CLU_073981_2_1_6"/>
<dbReference type="OrthoDB" id="9804006at2"/>
<dbReference type="Proteomes" id="UP000000642">
    <property type="component" value="Chromosome"/>
</dbReference>
<dbReference type="GO" id="GO:0005829">
    <property type="term" value="C:cytosol"/>
    <property type="evidence" value="ECO:0007669"/>
    <property type="project" value="GOC"/>
</dbReference>
<dbReference type="GO" id="GO:0043023">
    <property type="term" value="F:ribosomal large subunit binding"/>
    <property type="evidence" value="ECO:0007669"/>
    <property type="project" value="TreeGrafter"/>
</dbReference>
<dbReference type="GO" id="GO:0002184">
    <property type="term" value="P:cytoplasmic translational termination"/>
    <property type="evidence" value="ECO:0007669"/>
    <property type="project" value="TreeGrafter"/>
</dbReference>
<dbReference type="CDD" id="cd00520">
    <property type="entry name" value="RRF"/>
    <property type="match status" value="1"/>
</dbReference>
<dbReference type="FunFam" id="1.10.132.20:FF:000001">
    <property type="entry name" value="Ribosome-recycling factor"/>
    <property type="match status" value="1"/>
</dbReference>
<dbReference type="FunFam" id="3.30.1360.40:FF:000001">
    <property type="entry name" value="Ribosome-recycling factor"/>
    <property type="match status" value="1"/>
</dbReference>
<dbReference type="Gene3D" id="3.30.1360.40">
    <property type="match status" value="1"/>
</dbReference>
<dbReference type="Gene3D" id="1.10.132.20">
    <property type="entry name" value="Ribosome-recycling factor"/>
    <property type="match status" value="1"/>
</dbReference>
<dbReference type="HAMAP" id="MF_00040">
    <property type="entry name" value="RRF"/>
    <property type="match status" value="1"/>
</dbReference>
<dbReference type="InterPro" id="IPR002661">
    <property type="entry name" value="Ribosome_recyc_fac"/>
</dbReference>
<dbReference type="InterPro" id="IPR023584">
    <property type="entry name" value="Ribosome_recyc_fac_dom"/>
</dbReference>
<dbReference type="InterPro" id="IPR036191">
    <property type="entry name" value="RRF_sf"/>
</dbReference>
<dbReference type="NCBIfam" id="TIGR00496">
    <property type="entry name" value="frr"/>
    <property type="match status" value="1"/>
</dbReference>
<dbReference type="PANTHER" id="PTHR20982:SF3">
    <property type="entry name" value="MITOCHONDRIAL RIBOSOME RECYCLING FACTOR PSEUDO 1"/>
    <property type="match status" value="1"/>
</dbReference>
<dbReference type="PANTHER" id="PTHR20982">
    <property type="entry name" value="RIBOSOME RECYCLING FACTOR"/>
    <property type="match status" value="1"/>
</dbReference>
<dbReference type="Pfam" id="PF01765">
    <property type="entry name" value="RRF"/>
    <property type="match status" value="1"/>
</dbReference>
<dbReference type="SUPFAM" id="SSF55194">
    <property type="entry name" value="Ribosome recycling factor, RRF"/>
    <property type="match status" value="1"/>
</dbReference>
<accession>A1JP79</accession>
<evidence type="ECO:0000255" key="1">
    <source>
        <dbReference type="HAMAP-Rule" id="MF_00040"/>
    </source>
</evidence>
<comment type="function">
    <text evidence="1">Responsible for the release of ribosomes from messenger RNA at the termination of protein biosynthesis. May increase the efficiency of translation by recycling ribosomes from one round of translation to another.</text>
</comment>
<comment type="subcellular location">
    <subcellularLocation>
        <location evidence="1">Cytoplasm</location>
    </subcellularLocation>
</comment>
<comment type="similarity">
    <text evidence="1">Belongs to the RRF family.</text>
</comment>
<proteinExistence type="inferred from homology"/>